<gene>
    <name type="primary">todB</name>
</gene>
<keyword id="KW-0001">2Fe-2S</keyword>
<keyword id="KW-0058">Aromatic hydrocarbons catabolism</keyword>
<keyword id="KW-0249">Electron transport</keyword>
<keyword id="KW-0408">Iron</keyword>
<keyword id="KW-0411">Iron-sulfur</keyword>
<keyword id="KW-0479">Metal-binding</keyword>
<keyword id="KW-0813">Transport</keyword>
<protein>
    <recommendedName>
        <fullName>Toluene 1,2-dioxygenase system ferredoxin subunit</fullName>
    </recommendedName>
</protein>
<name>TODB_PSEPU</name>
<feature type="initiator methionine" description="Removed" evidence="1">
    <location>
        <position position="1"/>
    </location>
</feature>
<feature type="chain" id="PRO_0000201695" description="Toluene 1,2-dioxygenase system ferredoxin subunit">
    <location>
        <begin position="2"/>
        <end position="107"/>
    </location>
</feature>
<feature type="domain" description="Rieske" evidence="2">
    <location>
        <begin position="4"/>
        <end position="99"/>
    </location>
</feature>
<feature type="binding site" evidence="2">
    <location>
        <position position="43"/>
    </location>
    <ligand>
        <name>[2Fe-2S] cluster</name>
        <dbReference type="ChEBI" id="CHEBI:190135"/>
    </ligand>
</feature>
<feature type="binding site" evidence="2">
    <location>
        <position position="45"/>
    </location>
    <ligand>
        <name>[2Fe-2S] cluster</name>
        <dbReference type="ChEBI" id="CHEBI:190135"/>
    </ligand>
</feature>
<feature type="binding site" evidence="2">
    <location>
        <position position="62"/>
    </location>
    <ligand>
        <name>[2Fe-2S] cluster</name>
        <dbReference type="ChEBI" id="CHEBI:190135"/>
    </ligand>
</feature>
<feature type="binding site" evidence="2">
    <location>
        <position position="65"/>
    </location>
    <ligand>
        <name>[2Fe-2S] cluster</name>
        <dbReference type="ChEBI" id="CHEBI:190135"/>
    </ligand>
</feature>
<sequence>MTWTYILRQGDLPPGEMQRYEGGPEPVMVCNVDGEFFAVQDTCTHGDWALSDGYLDGDIVECTLHFGKFCVRTGKVKALPACKPIKVFPIKVEGDEVHVDLDNGELK</sequence>
<reference key="1">
    <citation type="journal article" date="1987" name="J. Bacteriol.">
        <title>Nucleotide sequencing and characterization of the genes encoding benzene oxidation enzymes of Pseudomonas putida.</title>
        <authorList>
            <person name="Irie S."/>
            <person name="Doi S."/>
            <person name="Yorifuji T."/>
            <person name="Takagi M."/>
            <person name="Yano K."/>
        </authorList>
    </citation>
    <scope>NUCLEOTIDE SEQUENCE [GENOMIC DNA]</scope>
    <source>
        <strain>BE-81</strain>
    </source>
</reference>
<organism>
    <name type="scientific">Pseudomonas putida</name>
    <name type="common">Arthrobacter siderocapsulatus</name>
    <dbReference type="NCBI Taxonomy" id="303"/>
    <lineage>
        <taxon>Bacteria</taxon>
        <taxon>Pseudomonadati</taxon>
        <taxon>Pseudomonadota</taxon>
        <taxon>Gammaproteobacteria</taxon>
        <taxon>Pseudomonadales</taxon>
        <taxon>Pseudomonadaceae</taxon>
        <taxon>Pseudomonas</taxon>
    </lineage>
</organism>
<evidence type="ECO:0000250" key="1"/>
<evidence type="ECO:0000255" key="2">
    <source>
        <dbReference type="PROSITE-ProRule" id="PRU00628"/>
    </source>
</evidence>
<evidence type="ECO:0000305" key="3"/>
<proteinExistence type="inferred from homology"/>
<dbReference type="EMBL" id="M17904">
    <property type="status" value="NOT_ANNOTATED_CDS"/>
    <property type="molecule type" value="Genomic_DNA"/>
</dbReference>
<dbReference type="PIR" id="C36516">
    <property type="entry name" value="C36516"/>
</dbReference>
<dbReference type="RefSeq" id="WP_012052599.1">
    <property type="nucleotide sequence ID" value="NZ_NHBC01000013.1"/>
</dbReference>
<dbReference type="SMR" id="P0C620"/>
<dbReference type="UniPathway" id="UPA00273"/>
<dbReference type="GO" id="GO:0051537">
    <property type="term" value="F:2 iron, 2 sulfur cluster binding"/>
    <property type="evidence" value="ECO:0007669"/>
    <property type="project" value="UniProtKB-KW"/>
</dbReference>
<dbReference type="GO" id="GO:0046872">
    <property type="term" value="F:metal ion binding"/>
    <property type="evidence" value="ECO:0007669"/>
    <property type="project" value="UniProtKB-KW"/>
</dbReference>
<dbReference type="GO" id="GO:0042203">
    <property type="term" value="P:toluene catabolic process"/>
    <property type="evidence" value="ECO:0007669"/>
    <property type="project" value="UniProtKB-UniPathway"/>
</dbReference>
<dbReference type="CDD" id="cd03528">
    <property type="entry name" value="Rieske_RO_ferredoxin"/>
    <property type="match status" value="1"/>
</dbReference>
<dbReference type="Gene3D" id="2.102.10.10">
    <property type="entry name" value="Rieske [2Fe-2S] iron-sulphur domain"/>
    <property type="match status" value="1"/>
</dbReference>
<dbReference type="InterPro" id="IPR017941">
    <property type="entry name" value="Rieske_2Fe-2S"/>
</dbReference>
<dbReference type="InterPro" id="IPR036922">
    <property type="entry name" value="Rieske_2Fe-2S_sf"/>
</dbReference>
<dbReference type="PANTHER" id="PTHR21496:SF23">
    <property type="entry name" value="3-PHENYLPROPIONATE_CINNAMIC ACID DIOXYGENASE FERREDOXIN SUBUNIT"/>
    <property type="match status" value="1"/>
</dbReference>
<dbReference type="PANTHER" id="PTHR21496">
    <property type="entry name" value="FERREDOXIN-RELATED"/>
    <property type="match status" value="1"/>
</dbReference>
<dbReference type="Pfam" id="PF00355">
    <property type="entry name" value="Rieske"/>
    <property type="match status" value="1"/>
</dbReference>
<dbReference type="SUPFAM" id="SSF50022">
    <property type="entry name" value="ISP domain"/>
    <property type="match status" value="1"/>
</dbReference>
<dbReference type="PROSITE" id="PS51296">
    <property type="entry name" value="RIESKE"/>
    <property type="match status" value="1"/>
</dbReference>
<comment type="function">
    <text>This protein seems to be a 2Fe-2S ferredoxin.</text>
</comment>
<comment type="pathway">
    <text>Xenobiotic degradation; toluene degradation.</text>
</comment>
<comment type="subunit">
    <text>This dioxygenase system consists of four proteins: the two subunits of the hydroxylase component (todC1 and todC2), a ferredoxin (todB) and a ferredoxin reductase (todA).</text>
</comment>
<comment type="similarity">
    <text evidence="3">Belongs to the bacterial ring-hydroxylating dioxygenase ferredoxin component family.</text>
</comment>
<comment type="sequence caution" evidence="3">
    <conflict type="frameshift">
        <sequence resource="EMBL" id="M17904"/>
    </conflict>
</comment>
<accession>P0C620</accession>
<accession>P13370</accession>